<reference key="1">
    <citation type="journal article" date="2001" name="J. Immunol.">
        <title>PGRL is a major CD81-associated protein on lymphocytes and distinguishes a new family of cell surface proteins.</title>
        <authorList>
            <person name="Clark K.L."/>
            <person name="Zeng Z."/>
            <person name="Langford A.L."/>
            <person name="Bowen S.M."/>
            <person name="Todd S.C."/>
        </authorList>
    </citation>
    <scope>NUCLEOTIDE SEQUENCE [MRNA]</scope>
    <scope>FUNCTION</scope>
    <scope>INTERACTION WITH CD81</scope>
    <scope>IDENTIFICATION BY MASS SPECTROMETRY</scope>
    <scope>DOMAIN</scope>
</reference>
<reference key="2">
    <citation type="journal article" date="2003" name="Mol. Cell. Neurosci.">
        <title>Genomic organization and embryonic expression of Igsf8, an immunoglobulin superfamily member implicated in development of the nervous system and organ epithelia.</title>
        <authorList>
            <person name="Murdoch J.N."/>
            <person name="Doudney K."/>
            <person name="Gerrelli D."/>
            <person name="Wortham N."/>
            <person name="Paternotte C."/>
            <person name="Stanier P."/>
            <person name="Copp A.J."/>
        </authorList>
    </citation>
    <scope>NUCLEOTIDE SEQUENCE [MRNA]</scope>
    <scope>DEVELOPMENTAL STAGE</scope>
</reference>
<reference key="3">
    <citation type="journal article" date="2005" name="Science">
        <title>The transcriptional landscape of the mammalian genome.</title>
        <authorList>
            <person name="Carninci P."/>
            <person name="Kasukawa T."/>
            <person name="Katayama S."/>
            <person name="Gough J."/>
            <person name="Frith M.C."/>
            <person name="Maeda N."/>
            <person name="Oyama R."/>
            <person name="Ravasi T."/>
            <person name="Lenhard B."/>
            <person name="Wells C."/>
            <person name="Kodzius R."/>
            <person name="Shimokawa K."/>
            <person name="Bajic V.B."/>
            <person name="Brenner S.E."/>
            <person name="Batalov S."/>
            <person name="Forrest A.R."/>
            <person name="Zavolan M."/>
            <person name="Davis M.J."/>
            <person name="Wilming L.G."/>
            <person name="Aidinis V."/>
            <person name="Allen J.E."/>
            <person name="Ambesi-Impiombato A."/>
            <person name="Apweiler R."/>
            <person name="Aturaliya R.N."/>
            <person name="Bailey T.L."/>
            <person name="Bansal M."/>
            <person name="Baxter L."/>
            <person name="Beisel K.W."/>
            <person name="Bersano T."/>
            <person name="Bono H."/>
            <person name="Chalk A.M."/>
            <person name="Chiu K.P."/>
            <person name="Choudhary V."/>
            <person name="Christoffels A."/>
            <person name="Clutterbuck D.R."/>
            <person name="Crowe M.L."/>
            <person name="Dalla E."/>
            <person name="Dalrymple B.P."/>
            <person name="de Bono B."/>
            <person name="Della Gatta G."/>
            <person name="di Bernardo D."/>
            <person name="Down T."/>
            <person name="Engstrom P."/>
            <person name="Fagiolini M."/>
            <person name="Faulkner G."/>
            <person name="Fletcher C.F."/>
            <person name="Fukushima T."/>
            <person name="Furuno M."/>
            <person name="Futaki S."/>
            <person name="Gariboldi M."/>
            <person name="Georgii-Hemming P."/>
            <person name="Gingeras T.R."/>
            <person name="Gojobori T."/>
            <person name="Green R.E."/>
            <person name="Gustincich S."/>
            <person name="Harbers M."/>
            <person name="Hayashi Y."/>
            <person name="Hensch T.K."/>
            <person name="Hirokawa N."/>
            <person name="Hill D."/>
            <person name="Huminiecki L."/>
            <person name="Iacono M."/>
            <person name="Ikeo K."/>
            <person name="Iwama A."/>
            <person name="Ishikawa T."/>
            <person name="Jakt M."/>
            <person name="Kanapin A."/>
            <person name="Katoh M."/>
            <person name="Kawasawa Y."/>
            <person name="Kelso J."/>
            <person name="Kitamura H."/>
            <person name="Kitano H."/>
            <person name="Kollias G."/>
            <person name="Krishnan S.P."/>
            <person name="Kruger A."/>
            <person name="Kummerfeld S.K."/>
            <person name="Kurochkin I.V."/>
            <person name="Lareau L.F."/>
            <person name="Lazarevic D."/>
            <person name="Lipovich L."/>
            <person name="Liu J."/>
            <person name="Liuni S."/>
            <person name="McWilliam S."/>
            <person name="Madan Babu M."/>
            <person name="Madera M."/>
            <person name="Marchionni L."/>
            <person name="Matsuda H."/>
            <person name="Matsuzawa S."/>
            <person name="Miki H."/>
            <person name="Mignone F."/>
            <person name="Miyake S."/>
            <person name="Morris K."/>
            <person name="Mottagui-Tabar S."/>
            <person name="Mulder N."/>
            <person name="Nakano N."/>
            <person name="Nakauchi H."/>
            <person name="Ng P."/>
            <person name="Nilsson R."/>
            <person name="Nishiguchi S."/>
            <person name="Nishikawa S."/>
            <person name="Nori F."/>
            <person name="Ohara O."/>
            <person name="Okazaki Y."/>
            <person name="Orlando V."/>
            <person name="Pang K.C."/>
            <person name="Pavan W.J."/>
            <person name="Pavesi G."/>
            <person name="Pesole G."/>
            <person name="Petrovsky N."/>
            <person name="Piazza S."/>
            <person name="Reed J."/>
            <person name="Reid J.F."/>
            <person name="Ring B.Z."/>
            <person name="Ringwald M."/>
            <person name="Rost B."/>
            <person name="Ruan Y."/>
            <person name="Salzberg S.L."/>
            <person name="Sandelin A."/>
            <person name="Schneider C."/>
            <person name="Schoenbach C."/>
            <person name="Sekiguchi K."/>
            <person name="Semple C.A."/>
            <person name="Seno S."/>
            <person name="Sessa L."/>
            <person name="Sheng Y."/>
            <person name="Shibata Y."/>
            <person name="Shimada H."/>
            <person name="Shimada K."/>
            <person name="Silva D."/>
            <person name="Sinclair B."/>
            <person name="Sperling S."/>
            <person name="Stupka E."/>
            <person name="Sugiura K."/>
            <person name="Sultana R."/>
            <person name="Takenaka Y."/>
            <person name="Taki K."/>
            <person name="Tammoja K."/>
            <person name="Tan S.L."/>
            <person name="Tang S."/>
            <person name="Taylor M.S."/>
            <person name="Tegner J."/>
            <person name="Teichmann S.A."/>
            <person name="Ueda H.R."/>
            <person name="van Nimwegen E."/>
            <person name="Verardo R."/>
            <person name="Wei C.L."/>
            <person name="Yagi K."/>
            <person name="Yamanishi H."/>
            <person name="Zabarovsky E."/>
            <person name="Zhu S."/>
            <person name="Zimmer A."/>
            <person name="Hide W."/>
            <person name="Bult C."/>
            <person name="Grimmond S.M."/>
            <person name="Teasdale R.D."/>
            <person name="Liu E.T."/>
            <person name="Brusic V."/>
            <person name="Quackenbush J."/>
            <person name="Wahlestedt C."/>
            <person name="Mattick J.S."/>
            <person name="Hume D.A."/>
            <person name="Kai C."/>
            <person name="Sasaki D."/>
            <person name="Tomaru Y."/>
            <person name="Fukuda S."/>
            <person name="Kanamori-Katayama M."/>
            <person name="Suzuki M."/>
            <person name="Aoki J."/>
            <person name="Arakawa T."/>
            <person name="Iida J."/>
            <person name="Imamura K."/>
            <person name="Itoh M."/>
            <person name="Kato T."/>
            <person name="Kawaji H."/>
            <person name="Kawagashira N."/>
            <person name="Kawashima T."/>
            <person name="Kojima M."/>
            <person name="Kondo S."/>
            <person name="Konno H."/>
            <person name="Nakano K."/>
            <person name="Ninomiya N."/>
            <person name="Nishio T."/>
            <person name="Okada M."/>
            <person name="Plessy C."/>
            <person name="Shibata K."/>
            <person name="Shiraki T."/>
            <person name="Suzuki S."/>
            <person name="Tagami M."/>
            <person name="Waki K."/>
            <person name="Watahiki A."/>
            <person name="Okamura-Oho Y."/>
            <person name="Suzuki H."/>
            <person name="Kawai J."/>
            <person name="Hayashizaki Y."/>
        </authorList>
    </citation>
    <scope>NUCLEOTIDE SEQUENCE [LARGE SCALE MRNA]</scope>
    <source>
        <strain>BALB/cJ</strain>
    </source>
</reference>
<reference key="4">
    <citation type="journal article" date="2004" name="Genome Res.">
        <title>The status, quality, and expansion of the NIH full-length cDNA project: the Mammalian Gene Collection (MGC).</title>
        <authorList>
            <consortium name="The MGC Project Team"/>
        </authorList>
    </citation>
    <scope>NUCLEOTIDE SEQUENCE [LARGE SCALE MRNA]</scope>
    <source>
        <strain>C57BL/6J</strain>
        <strain>FVB/N</strain>
        <tissue>Colon</tissue>
        <tissue>Mammary tumor</tissue>
    </source>
</reference>
<reference key="5">
    <citation type="journal article" date="2006" name="Neurosci. Lett.">
        <title>Neuronal expression of keratinocyte-associated transmembrane protein-4, KCT-4, in mouse brain and its up-regulation by neurite outgrowth of Neuro-2a cells.</title>
        <authorList>
            <person name="Yamada O."/>
            <person name="Tamura K."/>
            <person name="Yagihara H."/>
            <person name="Isotani M."/>
            <person name="Washizu T."/>
            <person name="Bonkobara M."/>
        </authorList>
    </citation>
    <scope>FUNCTION</scope>
    <scope>INDUCTION</scope>
    <scope>TISSUE SPECIFICITY</scope>
</reference>
<reference key="6">
    <citation type="journal article" date="2010" name="Cell">
        <title>A tissue-specific atlas of mouse protein phosphorylation and expression.</title>
        <authorList>
            <person name="Huttlin E.L."/>
            <person name="Jedrychowski M.P."/>
            <person name="Elias J.E."/>
            <person name="Goswami T."/>
            <person name="Rad R."/>
            <person name="Beausoleil S.A."/>
            <person name="Villen J."/>
            <person name="Haas W."/>
            <person name="Sowa M.E."/>
            <person name="Gygi S.P."/>
        </authorList>
    </citation>
    <scope>IDENTIFICATION BY MASS SPECTROMETRY [LARGE SCALE ANALYSIS]</scope>
    <source>
        <tissue>Brain</tissue>
        <tissue>Brown adipose tissue</tissue>
        <tissue>Kidney</tissue>
        <tissue>Spleen</tissue>
        <tissue>Testis</tissue>
    </source>
</reference>
<reference key="7">
    <citation type="journal article" date="2011" name="Biochem. J.">
        <title>Differential functions of phospholipid binding and palmitoylation of tumour suppressor EWI2/PGRL.</title>
        <authorList>
            <person name="He B."/>
            <person name="Zhang Y.H."/>
            <person name="Richardson M.M."/>
            <person name="Zhang J.S."/>
            <person name="Rubinstein E."/>
            <person name="Zhang X.A."/>
        </authorList>
    </citation>
    <scope>PALMITOYLATION AT CYS-602 AND CYS-603</scope>
    <scope>DOMAIN</scope>
    <scope>SUBCELLULAR LOCATION</scope>
</reference>
<reference key="8">
    <citation type="journal article" date="2012" name="Fertil. Steril.">
        <title>Tetraspanin-interacting protein IGSF8 is dispensable for mouse fertility.</title>
        <authorList>
            <person name="Inoue N."/>
            <person name="Nishikawa T."/>
            <person name="Ikawa M."/>
            <person name="Okabe M."/>
        </authorList>
    </citation>
    <scope>DISRUPTION PHENOTYPE</scope>
</reference>
<reference key="9">
    <citation type="journal article" date="2013" name="Nat. Commun.">
        <title>Normal muscle regeneration requires tight control of muscle cell fusion by tetraspanins CD9 and CD81.</title>
        <authorList>
            <person name="Charrin S."/>
            <person name="Latil M."/>
            <person name="Soave S."/>
            <person name="Polesskaya A."/>
            <person name="Chretien F."/>
            <person name="Boucheix C."/>
            <person name="Rubinstein E."/>
        </authorList>
    </citation>
    <scope>INTERACTION WITH CD81</scope>
    <scope>INTERACTION WITH PTGFRN</scope>
    <scope>INTERACTION WITH CD9</scope>
    <scope>TISSUE SPECIFICITY</scope>
</reference>
<reference key="10">
    <citation type="journal article" date="2024" name="Cell">
        <title>IGSF8 is an innate immune checkpoint and cancer immunotherapy target.</title>
        <authorList>
            <person name="Li Y."/>
            <person name="Wu X."/>
            <person name="Sheng C."/>
            <person name="Liu H."/>
            <person name="Liu H."/>
            <person name="Tang Y."/>
            <person name="Liu C."/>
            <person name="Ding Q."/>
            <person name="Xie B."/>
            <person name="Xiao X."/>
            <person name="Zheng R."/>
            <person name="Yu Q."/>
            <person name="Guo Z."/>
            <person name="Ma J."/>
            <person name="Wang J."/>
            <person name="Gao J."/>
            <person name="Tian M."/>
            <person name="Wang W."/>
            <person name="Zhou J."/>
            <person name="Jiang L."/>
            <person name="Gu M."/>
            <person name="Shi S."/>
            <person name="Paull M."/>
            <person name="Yang G."/>
            <person name="Yang W."/>
            <person name="Landau S."/>
            <person name="Bao X."/>
            <person name="Hu X."/>
            <person name="Liu X.S."/>
            <person name="Xiao T."/>
        </authorList>
    </citation>
    <scope>FUNCTION</scope>
    <scope>INTERACTION WITH KLRA9</scope>
</reference>
<gene>
    <name type="primary">Igsf8</name>
    <name type="synonym">Ewi2</name>
    <name type="synonym">Kct4</name>
    <name type="synonym">Pgrl</name>
</gene>
<keyword id="KW-1003">Cell membrane</keyword>
<keyword id="KW-1015">Disulfide bond</keyword>
<keyword id="KW-0325">Glycoprotein</keyword>
<keyword id="KW-0393">Immunoglobulin domain</keyword>
<keyword id="KW-0449">Lipoprotein</keyword>
<keyword id="KW-0472">Membrane</keyword>
<keyword id="KW-0564">Palmitate</keyword>
<keyword id="KW-0597">Phosphoprotein</keyword>
<keyword id="KW-1185">Reference proteome</keyword>
<keyword id="KW-0677">Repeat</keyword>
<keyword id="KW-0732">Signal</keyword>
<keyword id="KW-0812">Transmembrane</keyword>
<keyword id="KW-1133">Transmembrane helix</keyword>
<sequence length="611" mass="65011">MGVPSPTPLSSLLLLLLILGTRCYARQVHVPRGPLYRVAGTAVSISCNVSDYEGPAQQDFEWFMYRPEAPATSLGIVSTKDSQFSYAVFGPRVASGDLQVQRLKGDSVVLKIARLQAQDSGFYECYTPSTDTQYLGNYSAKVELRVLPDELQVSAAPPGPRGRQAATSPSRLTVHEGQELALGCLAQTKTKKHTHLSVSFGRAIPEAPVGRATLQEVVGLRSDMAVEAGAPYAERLASGELRLSKEGTDRYRMVVGGAQAGDSGTYHCTAAEWIQDPDGSWVQVAEKRAVLAHVDVQTLSSQLAVTVGPGERRIGPGEPLELLCNVSGALPPPGRHAAYSVGWEMAPAGAPGPGRLVAQLDTEGIGSLGPGYEDRHIAMEKVASRTYRLRLEAARPADAGTYRCLAKAYVRGSGTRLREAASARSRPLPVHVREEGVVLEAVAWLAGGTVYRGETASLLCNISVRGGPPGLRLAASWWVERPEEGELSSGPAQLVGGVGQDGVAELGVRPGGGPVSVELVGPRSHRLRLHGLGPEDEGIYHCAPSAWVQHADYSWYQAGSARSGPVTVYPYTHAVDTLFVPLLVGTGVALVTGASVLATITCCFMKRMRKR</sequence>
<accession>Q8R366</accession>
<accession>Q8R0L7</accession>
<feature type="signal peptide" evidence="1">
    <location>
        <begin position="1"/>
        <end position="25"/>
    </location>
</feature>
<feature type="chain" id="PRO_0000226248" description="Immunoglobulin superfamily member 8">
    <location>
        <begin position="26"/>
        <end position="611"/>
    </location>
</feature>
<feature type="topological domain" description="Extracellular" evidence="3">
    <location>
        <begin position="26"/>
        <end position="577"/>
    </location>
</feature>
<feature type="transmembrane region" description="Helical" evidence="3">
    <location>
        <begin position="578"/>
        <end position="598"/>
    </location>
</feature>
<feature type="topological domain" description="Cytoplasmic" evidence="3">
    <location>
        <begin position="599"/>
        <end position="611"/>
    </location>
</feature>
<feature type="domain" description="Ig-like C2-type 1">
    <location>
        <begin position="26"/>
        <end position="143"/>
    </location>
</feature>
<feature type="domain" description="Ig-like C2-type 2">
    <location>
        <begin position="160"/>
        <end position="284"/>
    </location>
</feature>
<feature type="domain" description="Ig-like C2-type 3">
    <location>
        <begin position="301"/>
        <end position="422"/>
    </location>
</feature>
<feature type="domain" description="Ig-like C2-type 4">
    <location>
        <begin position="429"/>
        <end position="554"/>
    </location>
</feature>
<feature type="short sequence motif" description="EWI motif">
    <location>
        <begin position="272"/>
        <end position="274"/>
    </location>
</feature>
<feature type="modified residue" description="Phosphoserine" evidence="2">
    <location>
        <position position="516"/>
    </location>
</feature>
<feature type="lipid moiety-binding region" description="S-palmitoyl cysteine" evidence="8">
    <location>
        <position position="602"/>
    </location>
</feature>
<feature type="lipid moiety-binding region" description="S-palmitoyl cysteine" evidence="8">
    <location>
        <position position="603"/>
    </location>
</feature>
<feature type="glycosylation site" description="N-linked (GlcNAc...) asparagine" evidence="3">
    <location>
        <position position="48"/>
    </location>
</feature>
<feature type="glycosylation site" description="N-linked (GlcNAc...) asparagine" evidence="3">
    <location>
        <position position="137"/>
    </location>
</feature>
<feature type="glycosylation site" description="N-linked (GlcNAc...) asparagine" evidence="3">
    <location>
        <position position="325"/>
    </location>
</feature>
<feature type="disulfide bond" evidence="4">
    <location>
        <begin position="47"/>
        <end position="125"/>
    </location>
</feature>
<feature type="disulfide bond" evidence="4">
    <location>
        <begin position="184"/>
        <end position="268"/>
    </location>
</feature>
<feature type="disulfide bond" evidence="4">
    <location>
        <begin position="324"/>
        <end position="404"/>
    </location>
</feature>
<feature type="disulfide bond" evidence="4">
    <location>
        <begin position="460"/>
        <end position="542"/>
    </location>
</feature>
<feature type="sequence conflict" description="In Ref. 3; BAE26989/BAE40298." evidence="12" ref="3">
    <original>G</original>
    <variation>E</variation>
    <location>
        <position position="20"/>
    </location>
</feature>
<feature type="sequence conflict" description="In Ref. 3; BAE26904." evidence="12" ref="3">
    <original>R</original>
    <variation>Q</variation>
    <location>
        <position position="37"/>
    </location>
</feature>
<feature type="sequence conflict" description="In Ref. 3; BAE26904 and 4; AAH48387." evidence="12" ref="3 4">
    <original>R</original>
    <variation>H</variation>
    <location>
        <position position="221"/>
    </location>
</feature>
<feature type="sequence conflict" description="In Ref. 3; BAE26989/BAE40298." evidence="12" ref="3">
    <original>P</original>
    <variation>A</variation>
    <location>
        <position position="316"/>
    </location>
</feature>
<feature type="sequence conflict" description="In Ref. 3; BAE26904." evidence="12" ref="3">
    <original>P</original>
    <variation>H</variation>
    <location>
        <position position="319"/>
    </location>
</feature>
<feature type="sequence conflict" description="In Ref. 1; AAL02217." evidence="12" ref="1">
    <original>GL</original>
    <variation>RV</variation>
    <location>
        <begin position="470"/>
        <end position="471"/>
    </location>
</feature>
<feature type="sequence conflict" description="In Ref. 1, 3; BAE26904 and 4; AAH48387." evidence="12" ref="1 3 4">
    <original>S</original>
    <variation>T</variation>
    <location>
        <position position="489"/>
    </location>
</feature>
<feature type="sequence conflict" description="In Ref. 3; BAE26904." evidence="12" ref="3">
    <original>W</original>
    <variation>S</variation>
    <location>
        <position position="547"/>
    </location>
</feature>
<comment type="function">
    <text evidence="2 5 7 11">Member of the immunoglobulin superfamily (IgSF) that links tetraspanin-enriched microdomains to the actin cytoskeleton and plays several important roles in innate and adaptive immunity (PubMed:11673522). Acts as an inducible receptor of HSPA8 on dendritic cells to enhance the CCL21/SLC-dependent migration of activated mature dendritic cells while attenuating their antigen-specific stimulatory capacities. In complex with alpha-actinins ACTN1 and ACTN4, regulates actin dynamics in the immune synapse and subsequent T-cell activation. Inhibits the entry of several viruses such as hepatitis C Virus (HCV) or HIV-1. Mechanistically, promotes a change in CD81 organization at the plasma membrane by significantly restricting its diffusion which in turn influences CD81 interaction with Claudin-1/CLDN1, preventing CLDN1 from acting as a co-receptor required for HCV entry. Accumulates at the presynaptic terminal, the producer cell side of the virological synapse, to prevent HIV-1 Env-mediated cell-cell fusion. Highly expressed on malignant cells with antigen presentation defects, interacts with NK receptor KLRA9 to suppress NK-cell cytotoxicity (PubMed:38657602). May participate in the regulation of neurite outgrowth and maintenance of the neural network in the adult brain (PubMed:16203089).</text>
</comment>
<comment type="subunit">
    <text evidence="2 5 10">Interacts directly with CD82 and CD9/tetraspanin-29. Also interacts with integrin alpha-3/beta-1 and integrin alpha-4/beta-1 (By similarity). Part of a complex composed of CD9, PTGFRN and CD81 (PubMed:11673522, PubMed:23575678). Interacts with CD81/tetraspanin-28.</text>
</comment>
<comment type="subcellular location">
    <subcellularLocation>
        <location evidence="8">Cell membrane</location>
        <topology evidence="8">Single-pass membrane protein</topology>
    </subcellularLocation>
</comment>
<comment type="tissue specificity">
    <text evidence="7 10">Expressed in lymphocytes as well as in many tissues with higher expression in brain. Detected in all regions of the brain with weak expression in the pituitary. Expressed selectively by neurons but not by glial cells. Expressed in myoblasts (at protein level).</text>
</comment>
<comment type="developmental stage">
    <text evidence="6">Expressed at 9.5 dpc in the ventral domain of the neural tube, with dorsal expression apparent at 10.5 dpc, as well as in the dorsal bud of the pancreas. Detected at 11.5 dpc within the ventricular zone of the neural tube in the hindbrain, diencephalon and telencephalon; also detected in the epithelial lining of the bronchi and esophagus. At 12.5 dpc, expressed in the bronchi, in the atrial and ventricular myocardium, the dorsal root ganglia and the epithelial lining of the rectum and bladder. At 15.5 dpc, detected in the developing choroid plexus epithelium, neural retina, olfactory epithelium and developing vomeronasal organ.</text>
</comment>
<comment type="induction">
    <text evidence="7">Induced by neurite outgrowth in neuroblastoma cell lines Neuro-2a.</text>
</comment>
<comment type="domain">
    <text>The Ig-like C2-type domains 3 and 4 are required for interaction with CD81.</text>
</comment>
<comment type="domain">
    <text>The short cytoplasmic domain is very basic, interacts with membrane PIPs, and mediates plasma membrane localization.</text>
</comment>
<comment type="disruption phenotype">
    <text evidence="9">Igsf8-deficient female mice show no fertilization defect. Igsf8-deficient eggs retain normal level and localization of CD9, resulting in normal microvilli formation, which indicates that IGSF8 is dispensable in fertility.</text>
</comment>
<evidence type="ECO:0000250" key="1"/>
<evidence type="ECO:0000250" key="2">
    <source>
        <dbReference type="UniProtKB" id="Q969P0"/>
    </source>
</evidence>
<evidence type="ECO:0000255" key="3"/>
<evidence type="ECO:0000255" key="4">
    <source>
        <dbReference type="PROSITE-ProRule" id="PRU00114"/>
    </source>
</evidence>
<evidence type="ECO:0000269" key="5">
    <source>
    </source>
</evidence>
<evidence type="ECO:0000269" key="6">
    <source>
    </source>
</evidence>
<evidence type="ECO:0000269" key="7">
    <source>
    </source>
</evidence>
<evidence type="ECO:0000269" key="8">
    <source>
    </source>
</evidence>
<evidence type="ECO:0000269" key="9">
    <source>
    </source>
</evidence>
<evidence type="ECO:0000269" key="10">
    <source>
    </source>
</evidence>
<evidence type="ECO:0000269" key="11">
    <source>
    </source>
</evidence>
<evidence type="ECO:0000305" key="12"/>
<protein>
    <recommendedName>
        <fullName>Immunoglobulin superfamily member 8</fullName>
        <shortName>IgSF8</shortName>
    </recommendedName>
    <alternativeName>
        <fullName>CD81 partner 3</fullName>
    </alternativeName>
    <alternativeName>
        <fullName>Glu-Trp-Ile EWI motif-containing protein 2</fullName>
        <shortName>EWI-2</shortName>
    </alternativeName>
    <alternativeName>
        <fullName>Keratinocyte-associated transmembrane protein 4</fullName>
        <shortName>KCT-4</shortName>
    </alternativeName>
    <alternativeName>
        <fullName>Prostaglandin regulatory-like protein</fullName>
        <shortName>PGRL</shortName>
    </alternativeName>
    <cdAntigenName>CD316</cdAntigenName>
</protein>
<organism>
    <name type="scientific">Mus musculus</name>
    <name type="common">Mouse</name>
    <dbReference type="NCBI Taxonomy" id="10090"/>
    <lineage>
        <taxon>Eukaryota</taxon>
        <taxon>Metazoa</taxon>
        <taxon>Chordata</taxon>
        <taxon>Craniata</taxon>
        <taxon>Vertebrata</taxon>
        <taxon>Euteleostomi</taxon>
        <taxon>Mammalia</taxon>
        <taxon>Eutheria</taxon>
        <taxon>Euarchontoglires</taxon>
        <taxon>Glires</taxon>
        <taxon>Rodentia</taxon>
        <taxon>Myomorpha</taxon>
        <taxon>Muroidea</taxon>
        <taxon>Muridae</taxon>
        <taxon>Murinae</taxon>
        <taxon>Mus</taxon>
        <taxon>Mus</taxon>
    </lineage>
</organism>
<proteinExistence type="evidence at protein level"/>
<dbReference type="EMBL" id="AF411055">
    <property type="protein sequence ID" value="AAL02217.1"/>
    <property type="molecule type" value="mRNA"/>
</dbReference>
<dbReference type="EMBL" id="AF439263">
    <property type="protein sequence ID" value="AAN63626.1"/>
    <property type="molecule type" value="mRNA"/>
</dbReference>
<dbReference type="EMBL" id="AK146104">
    <property type="protein sequence ID" value="BAE26904.1"/>
    <property type="molecule type" value="mRNA"/>
</dbReference>
<dbReference type="EMBL" id="AK146221">
    <property type="protein sequence ID" value="BAE26989.1"/>
    <property type="molecule type" value="mRNA"/>
</dbReference>
<dbReference type="EMBL" id="AK168363">
    <property type="protein sequence ID" value="BAE40298.1"/>
    <property type="molecule type" value="mRNA"/>
</dbReference>
<dbReference type="EMBL" id="BC026464">
    <property type="protein sequence ID" value="AAH26464.1"/>
    <property type="molecule type" value="mRNA"/>
</dbReference>
<dbReference type="EMBL" id="BC026633">
    <property type="protein sequence ID" value="AAH26633.1"/>
    <property type="molecule type" value="mRNA"/>
</dbReference>
<dbReference type="EMBL" id="BC048387">
    <property type="protein sequence ID" value="AAH48387.1"/>
    <property type="molecule type" value="mRNA"/>
</dbReference>
<dbReference type="CCDS" id="CCDS15511.1"/>
<dbReference type="RefSeq" id="NP_536344.1">
    <property type="nucleotide sequence ID" value="NM_080419.2"/>
</dbReference>
<dbReference type="BioGRID" id="228282">
    <property type="interactions" value="30"/>
</dbReference>
<dbReference type="FunCoup" id="Q8R366">
    <property type="interactions" value="644"/>
</dbReference>
<dbReference type="IntAct" id="Q8R366">
    <property type="interactions" value="1"/>
</dbReference>
<dbReference type="MINT" id="Q8R366"/>
<dbReference type="STRING" id="10090.ENSMUSP00000041232"/>
<dbReference type="GlyConnect" id="2384">
    <property type="glycosylation" value="17 N-Linked glycans (4 sites)"/>
</dbReference>
<dbReference type="GlyCosmos" id="Q8R366">
    <property type="glycosylation" value="4 sites, 16 glycans"/>
</dbReference>
<dbReference type="GlyGen" id="Q8R366">
    <property type="glycosylation" value="7 sites, 22 N-linked glycans (4 sites), 1 O-linked glycan (1 site)"/>
</dbReference>
<dbReference type="iPTMnet" id="Q8R366"/>
<dbReference type="PhosphoSitePlus" id="Q8R366"/>
<dbReference type="SwissPalm" id="Q8R366"/>
<dbReference type="PaxDb" id="10090-ENSMUSP00000041232"/>
<dbReference type="PeptideAtlas" id="Q8R366"/>
<dbReference type="ProteomicsDB" id="269546"/>
<dbReference type="Pumba" id="Q8R366"/>
<dbReference type="DNASU" id="140559"/>
<dbReference type="GeneID" id="140559"/>
<dbReference type="KEGG" id="mmu:140559"/>
<dbReference type="UCSC" id="uc007dqe.1">
    <property type="organism name" value="mouse"/>
</dbReference>
<dbReference type="AGR" id="MGI:2154090"/>
<dbReference type="CTD" id="93185"/>
<dbReference type="MGI" id="MGI:2154090">
    <property type="gene designation" value="Igsf8"/>
</dbReference>
<dbReference type="eggNOG" id="ENOG502QTUT">
    <property type="taxonomic scope" value="Eukaryota"/>
</dbReference>
<dbReference type="InParanoid" id="Q8R366"/>
<dbReference type="OrthoDB" id="45801at9989"/>
<dbReference type="PhylomeDB" id="Q8R366"/>
<dbReference type="TreeFam" id="TF332702"/>
<dbReference type="BioGRID-ORCS" id="140559">
    <property type="hits" value="1 hit in 76 CRISPR screens"/>
</dbReference>
<dbReference type="CD-CODE" id="CE726F99">
    <property type="entry name" value="Postsynaptic density"/>
</dbReference>
<dbReference type="PRO" id="PR:Q8R366"/>
<dbReference type="Proteomes" id="UP000000589">
    <property type="component" value="Unplaced"/>
</dbReference>
<dbReference type="RNAct" id="Q8R366">
    <property type="molecule type" value="protein"/>
</dbReference>
<dbReference type="GO" id="GO:0030424">
    <property type="term" value="C:axon"/>
    <property type="evidence" value="ECO:0000314"/>
    <property type="project" value="MGI"/>
</dbReference>
<dbReference type="GO" id="GO:0016020">
    <property type="term" value="C:membrane"/>
    <property type="evidence" value="ECO:0000250"/>
    <property type="project" value="UniProtKB"/>
</dbReference>
<dbReference type="GO" id="GO:0043209">
    <property type="term" value="C:myelin sheath"/>
    <property type="evidence" value="ECO:0007005"/>
    <property type="project" value="UniProtKB"/>
</dbReference>
<dbReference type="GO" id="GO:0005886">
    <property type="term" value="C:plasma membrane"/>
    <property type="evidence" value="ECO:0007669"/>
    <property type="project" value="UniProtKB-SubCell"/>
</dbReference>
<dbReference type="GO" id="GO:0045202">
    <property type="term" value="C:synapse"/>
    <property type="evidence" value="ECO:0000314"/>
    <property type="project" value="MGI"/>
</dbReference>
<dbReference type="GO" id="GO:0050804">
    <property type="term" value="P:modulation of chemical synaptic transmission"/>
    <property type="evidence" value="ECO:0000314"/>
    <property type="project" value="SynGO"/>
</dbReference>
<dbReference type="GO" id="GO:2000145">
    <property type="term" value="P:regulation of cell motility"/>
    <property type="evidence" value="ECO:0000316"/>
    <property type="project" value="MGI"/>
</dbReference>
<dbReference type="FunFam" id="2.60.40.10:FF:004555">
    <property type="match status" value="1"/>
</dbReference>
<dbReference type="FunFam" id="2.60.40.10:FF:000191">
    <property type="entry name" value="Immunoglobulin superfamily member 3"/>
    <property type="match status" value="1"/>
</dbReference>
<dbReference type="FunFam" id="2.60.40.10:FF:000863">
    <property type="entry name" value="immunoglobulin superfamily member 8"/>
    <property type="match status" value="1"/>
</dbReference>
<dbReference type="Gene3D" id="2.60.40.10">
    <property type="entry name" value="Immunoglobulins"/>
    <property type="match status" value="3"/>
</dbReference>
<dbReference type="InterPro" id="IPR007110">
    <property type="entry name" value="Ig-like_dom"/>
</dbReference>
<dbReference type="InterPro" id="IPR036179">
    <property type="entry name" value="Ig-like_dom_sf"/>
</dbReference>
<dbReference type="InterPro" id="IPR013783">
    <property type="entry name" value="Ig-like_fold"/>
</dbReference>
<dbReference type="InterPro" id="IPR003599">
    <property type="entry name" value="Ig_sub"/>
</dbReference>
<dbReference type="InterPro" id="IPR013106">
    <property type="entry name" value="Ig_V-set"/>
</dbReference>
<dbReference type="InterPro" id="IPR051102">
    <property type="entry name" value="IgSF_V-set/TM_domain"/>
</dbReference>
<dbReference type="PANTHER" id="PTHR12207:SF22">
    <property type="entry name" value="IMMUNOGLOBULIN SUPERFAMILY MEMBER 8"/>
    <property type="match status" value="1"/>
</dbReference>
<dbReference type="PANTHER" id="PTHR12207">
    <property type="entry name" value="V-SET AND TRANSMEMBRANE DOMAIN-CONTAINING PROTEIN"/>
    <property type="match status" value="1"/>
</dbReference>
<dbReference type="Pfam" id="PF07686">
    <property type="entry name" value="V-set"/>
    <property type="match status" value="1"/>
</dbReference>
<dbReference type="SMART" id="SM00409">
    <property type="entry name" value="IG"/>
    <property type="match status" value="4"/>
</dbReference>
<dbReference type="SUPFAM" id="SSF48726">
    <property type="entry name" value="Immunoglobulin"/>
    <property type="match status" value="4"/>
</dbReference>
<dbReference type="PROSITE" id="PS50835">
    <property type="entry name" value="IG_LIKE"/>
    <property type="match status" value="2"/>
</dbReference>
<name>IGSF8_MOUSE</name>